<keyword id="KW-0378">Hydrolase</keyword>
<keyword id="KW-0546">Nucleotide metabolism</keyword>
<keyword id="KW-0547">Nucleotide-binding</keyword>
<keyword id="KW-1185">Reference proteome</keyword>
<organism>
    <name type="scientific">Haloarcula marismortui (strain ATCC 43049 / DSM 3752 / JCM 8966 / VKM B-1809)</name>
    <name type="common">Halobacterium marismortui</name>
    <dbReference type="NCBI Taxonomy" id="272569"/>
    <lineage>
        <taxon>Archaea</taxon>
        <taxon>Methanobacteriati</taxon>
        <taxon>Methanobacteriota</taxon>
        <taxon>Stenosarchaea group</taxon>
        <taxon>Halobacteria</taxon>
        <taxon>Halobacteriales</taxon>
        <taxon>Haloarculaceae</taxon>
        <taxon>Haloarcula</taxon>
    </lineage>
</organism>
<proteinExistence type="inferred from homology"/>
<comment type="function">
    <text evidence="1">Catalyzes the deamination of dCTP to dUTP.</text>
</comment>
<comment type="catalytic activity">
    <reaction evidence="1">
        <text>dCTP + H2O + H(+) = dUTP + NH4(+)</text>
        <dbReference type="Rhea" id="RHEA:22680"/>
        <dbReference type="ChEBI" id="CHEBI:15377"/>
        <dbReference type="ChEBI" id="CHEBI:15378"/>
        <dbReference type="ChEBI" id="CHEBI:28938"/>
        <dbReference type="ChEBI" id="CHEBI:61481"/>
        <dbReference type="ChEBI" id="CHEBI:61555"/>
        <dbReference type="EC" id="3.5.4.13"/>
    </reaction>
</comment>
<comment type="pathway">
    <text evidence="1">Pyrimidine metabolism; dUMP biosynthesis; dUMP from dCTP (dUTP route): step 1/2.</text>
</comment>
<comment type="subunit">
    <text evidence="1">Homotrimer.</text>
</comment>
<comment type="similarity">
    <text evidence="1">Belongs to the dCTP deaminase family.</text>
</comment>
<comment type="sequence caution" evidence="3">
    <conflict type="erroneous initiation">
        <sequence resource="EMBL-CDS" id="AAV46671"/>
    </conflict>
</comment>
<reference key="1">
    <citation type="journal article" date="2004" name="Genome Res.">
        <title>Genome sequence of Haloarcula marismortui: a halophilic archaeon from the Dead Sea.</title>
        <authorList>
            <person name="Baliga N.S."/>
            <person name="Bonneau R."/>
            <person name="Facciotti M.T."/>
            <person name="Pan M."/>
            <person name="Glusman G."/>
            <person name="Deutsch E.W."/>
            <person name="Shannon P."/>
            <person name="Chiu Y."/>
            <person name="Weng R.S."/>
            <person name="Gan R.R."/>
            <person name="Hung P."/>
            <person name="Date S.V."/>
            <person name="Marcotte E."/>
            <person name="Hood L."/>
            <person name="Ng W.V."/>
        </authorList>
    </citation>
    <scope>NUCLEOTIDE SEQUENCE [LARGE SCALE GENOMIC DNA]</scope>
    <source>
        <strain>ATCC 43049 / DSM 3752 / JCM 8966 / VKM B-1809</strain>
    </source>
</reference>
<gene>
    <name evidence="1" type="primary">dcd</name>
    <name type="ordered locus">rrnAC1776</name>
</gene>
<sequence>MILSDADILRRLEQGDLVVEPLDDPDIQIQPASVDLRLGHEFLEFQHANIPCIHPNSEDEVSDYVEETVIEEGGEFILHPGDFVLGTTHERVAIPDDLIAHVEGRSSLGRLAIVVHATAGLCDPGYEGQITLELSNLGTAPVALTPGMRISQLTFTELKTPADRPYGAERGSKYQGQSGPQASKIQGDREFGGDQ</sequence>
<dbReference type="EC" id="3.5.4.13" evidence="1"/>
<dbReference type="EMBL" id="AY596297">
    <property type="protein sequence ID" value="AAV46671.1"/>
    <property type="status" value="ALT_INIT"/>
    <property type="molecule type" value="Genomic_DNA"/>
</dbReference>
<dbReference type="RefSeq" id="WP_011223835.1">
    <property type="nucleotide sequence ID" value="NC_006396.1"/>
</dbReference>
<dbReference type="SMR" id="Q5V1D1"/>
<dbReference type="STRING" id="272569.rrnAC1776"/>
<dbReference type="PaxDb" id="272569-rrnAC1776"/>
<dbReference type="EnsemblBacteria" id="AAV46671">
    <property type="protein sequence ID" value="AAV46671"/>
    <property type="gene ID" value="rrnAC1776"/>
</dbReference>
<dbReference type="GeneID" id="40152724"/>
<dbReference type="KEGG" id="hma:rrnAC1776"/>
<dbReference type="PATRIC" id="fig|272569.17.peg.2451"/>
<dbReference type="eggNOG" id="arCOG04048">
    <property type="taxonomic scope" value="Archaea"/>
</dbReference>
<dbReference type="HOGENOM" id="CLU_087476_2_1_2"/>
<dbReference type="UniPathway" id="UPA00610">
    <property type="reaction ID" value="UER00665"/>
</dbReference>
<dbReference type="Proteomes" id="UP000001169">
    <property type="component" value="Chromosome I"/>
</dbReference>
<dbReference type="GO" id="GO:0008829">
    <property type="term" value="F:dCTP deaminase activity"/>
    <property type="evidence" value="ECO:0007669"/>
    <property type="project" value="UniProtKB-UniRule"/>
</dbReference>
<dbReference type="GO" id="GO:0000166">
    <property type="term" value="F:nucleotide binding"/>
    <property type="evidence" value="ECO:0007669"/>
    <property type="project" value="UniProtKB-KW"/>
</dbReference>
<dbReference type="GO" id="GO:0006226">
    <property type="term" value="P:dUMP biosynthetic process"/>
    <property type="evidence" value="ECO:0007669"/>
    <property type="project" value="UniProtKB-UniPathway"/>
</dbReference>
<dbReference type="GO" id="GO:0006229">
    <property type="term" value="P:dUTP biosynthetic process"/>
    <property type="evidence" value="ECO:0007669"/>
    <property type="project" value="UniProtKB-UniRule"/>
</dbReference>
<dbReference type="GO" id="GO:0015949">
    <property type="term" value="P:nucleobase-containing small molecule interconversion"/>
    <property type="evidence" value="ECO:0007669"/>
    <property type="project" value="TreeGrafter"/>
</dbReference>
<dbReference type="CDD" id="cd07557">
    <property type="entry name" value="trimeric_dUTPase"/>
    <property type="match status" value="1"/>
</dbReference>
<dbReference type="FunFam" id="2.70.40.10:FF:000005">
    <property type="entry name" value="dCTP deaminase, dUMP-forming"/>
    <property type="match status" value="1"/>
</dbReference>
<dbReference type="Gene3D" id="2.70.40.10">
    <property type="match status" value="1"/>
</dbReference>
<dbReference type="HAMAP" id="MF_00146">
    <property type="entry name" value="dCTP_deaminase"/>
    <property type="match status" value="1"/>
</dbReference>
<dbReference type="InterPro" id="IPR011962">
    <property type="entry name" value="dCTP_deaminase"/>
</dbReference>
<dbReference type="InterPro" id="IPR036157">
    <property type="entry name" value="dUTPase-like_sf"/>
</dbReference>
<dbReference type="InterPro" id="IPR033704">
    <property type="entry name" value="dUTPase_trimeric"/>
</dbReference>
<dbReference type="NCBIfam" id="TIGR02274">
    <property type="entry name" value="dCTP_deam"/>
    <property type="match status" value="1"/>
</dbReference>
<dbReference type="PANTHER" id="PTHR42680">
    <property type="entry name" value="DCTP DEAMINASE"/>
    <property type="match status" value="1"/>
</dbReference>
<dbReference type="PANTHER" id="PTHR42680:SF3">
    <property type="entry name" value="DCTP DEAMINASE"/>
    <property type="match status" value="1"/>
</dbReference>
<dbReference type="Pfam" id="PF22769">
    <property type="entry name" value="DCD"/>
    <property type="match status" value="1"/>
</dbReference>
<dbReference type="SUPFAM" id="SSF51283">
    <property type="entry name" value="dUTPase-like"/>
    <property type="match status" value="1"/>
</dbReference>
<protein>
    <recommendedName>
        <fullName evidence="1">dCTP deaminase</fullName>
        <ecNumber evidence="1">3.5.4.13</ecNumber>
    </recommendedName>
    <alternativeName>
        <fullName evidence="1">Deoxycytidine triphosphate deaminase</fullName>
    </alternativeName>
</protein>
<evidence type="ECO:0000255" key="1">
    <source>
        <dbReference type="HAMAP-Rule" id="MF_00146"/>
    </source>
</evidence>
<evidence type="ECO:0000256" key="2">
    <source>
        <dbReference type="SAM" id="MobiDB-lite"/>
    </source>
</evidence>
<evidence type="ECO:0000305" key="3"/>
<accession>Q5V1D1</accession>
<name>DCD_HALMA</name>
<feature type="chain" id="PRO_0000156027" description="dCTP deaminase">
    <location>
        <begin position="1"/>
        <end position="195"/>
    </location>
</feature>
<feature type="region of interest" description="Disordered" evidence="2">
    <location>
        <begin position="159"/>
        <end position="195"/>
    </location>
</feature>
<feature type="compositionally biased region" description="Basic and acidic residues" evidence="2">
    <location>
        <begin position="160"/>
        <end position="172"/>
    </location>
</feature>
<feature type="compositionally biased region" description="Polar residues" evidence="2">
    <location>
        <begin position="174"/>
        <end position="184"/>
    </location>
</feature>
<feature type="compositionally biased region" description="Basic and acidic residues" evidence="2">
    <location>
        <begin position="186"/>
        <end position="195"/>
    </location>
</feature>
<feature type="active site" description="Proton donor/acceptor" evidence="1">
    <location>
        <position position="133"/>
    </location>
</feature>
<feature type="binding site" evidence="1">
    <location>
        <begin position="105"/>
        <end position="110"/>
    </location>
    <ligand>
        <name>dCTP</name>
        <dbReference type="ChEBI" id="CHEBI:61481"/>
    </ligand>
</feature>
<feature type="binding site" evidence="1">
    <location>
        <position position="123"/>
    </location>
    <ligand>
        <name>dCTP</name>
        <dbReference type="ChEBI" id="CHEBI:61481"/>
    </ligand>
</feature>
<feature type="binding site" evidence="1">
    <location>
        <begin position="131"/>
        <end position="133"/>
    </location>
    <ligand>
        <name>dCTP</name>
        <dbReference type="ChEBI" id="CHEBI:61481"/>
    </ligand>
</feature>
<feature type="binding site" evidence="1">
    <location>
        <position position="152"/>
    </location>
    <ligand>
        <name>dCTP</name>
        <dbReference type="ChEBI" id="CHEBI:61481"/>
    </ligand>
</feature>
<feature type="binding site" evidence="1">
    <location>
        <position position="166"/>
    </location>
    <ligand>
        <name>dCTP</name>
        <dbReference type="ChEBI" id="CHEBI:61481"/>
    </ligand>
</feature>
<feature type="binding site" evidence="1">
    <location>
        <position position="173"/>
    </location>
    <ligand>
        <name>dCTP</name>
        <dbReference type="ChEBI" id="CHEBI:61481"/>
    </ligand>
</feature>
<feature type="binding site" evidence="1">
    <location>
        <position position="177"/>
    </location>
    <ligand>
        <name>dCTP</name>
        <dbReference type="ChEBI" id="CHEBI:61481"/>
    </ligand>
</feature>